<keyword id="KW-1185">Reference proteome</keyword>
<reference key="1">
    <citation type="journal article" date="1998" name="Microbiology">
        <title>The 172 kb prkA-addAB region from 83 degrees to 97 degrees of the Bacillus subtilis chromosome contains several dysfunctional genes, the glyB marker, many genes encoding transporter proteins, and the ubiquitous hit gene.</title>
        <authorList>
            <person name="Noback M.A."/>
            <person name="Holsappel S."/>
            <person name="Kiewiet R."/>
            <person name="Terpstra P."/>
            <person name="Wambutt R."/>
            <person name="Wedler H."/>
            <person name="Venema G."/>
            <person name="Bron S."/>
        </authorList>
    </citation>
    <scope>NUCLEOTIDE SEQUENCE [GENOMIC DNA]</scope>
    <source>
        <strain>168</strain>
    </source>
</reference>
<reference key="2">
    <citation type="journal article" date="1997" name="Nature">
        <title>The complete genome sequence of the Gram-positive bacterium Bacillus subtilis.</title>
        <authorList>
            <person name="Kunst F."/>
            <person name="Ogasawara N."/>
            <person name="Moszer I."/>
            <person name="Albertini A.M."/>
            <person name="Alloni G."/>
            <person name="Azevedo V."/>
            <person name="Bertero M.G."/>
            <person name="Bessieres P."/>
            <person name="Bolotin A."/>
            <person name="Borchert S."/>
            <person name="Borriss R."/>
            <person name="Boursier L."/>
            <person name="Brans A."/>
            <person name="Braun M."/>
            <person name="Brignell S.C."/>
            <person name="Bron S."/>
            <person name="Brouillet S."/>
            <person name="Bruschi C.V."/>
            <person name="Caldwell B."/>
            <person name="Capuano V."/>
            <person name="Carter N.M."/>
            <person name="Choi S.-K."/>
            <person name="Codani J.-J."/>
            <person name="Connerton I.F."/>
            <person name="Cummings N.J."/>
            <person name="Daniel R.A."/>
            <person name="Denizot F."/>
            <person name="Devine K.M."/>
            <person name="Duesterhoeft A."/>
            <person name="Ehrlich S.D."/>
            <person name="Emmerson P.T."/>
            <person name="Entian K.-D."/>
            <person name="Errington J."/>
            <person name="Fabret C."/>
            <person name="Ferrari E."/>
            <person name="Foulger D."/>
            <person name="Fritz C."/>
            <person name="Fujita M."/>
            <person name="Fujita Y."/>
            <person name="Fuma S."/>
            <person name="Galizzi A."/>
            <person name="Galleron N."/>
            <person name="Ghim S.-Y."/>
            <person name="Glaser P."/>
            <person name="Goffeau A."/>
            <person name="Golightly E.J."/>
            <person name="Grandi G."/>
            <person name="Guiseppi G."/>
            <person name="Guy B.J."/>
            <person name="Haga K."/>
            <person name="Haiech J."/>
            <person name="Harwood C.R."/>
            <person name="Henaut A."/>
            <person name="Hilbert H."/>
            <person name="Holsappel S."/>
            <person name="Hosono S."/>
            <person name="Hullo M.-F."/>
            <person name="Itaya M."/>
            <person name="Jones L.-M."/>
            <person name="Joris B."/>
            <person name="Karamata D."/>
            <person name="Kasahara Y."/>
            <person name="Klaerr-Blanchard M."/>
            <person name="Klein C."/>
            <person name="Kobayashi Y."/>
            <person name="Koetter P."/>
            <person name="Koningstein G."/>
            <person name="Krogh S."/>
            <person name="Kumano M."/>
            <person name="Kurita K."/>
            <person name="Lapidus A."/>
            <person name="Lardinois S."/>
            <person name="Lauber J."/>
            <person name="Lazarevic V."/>
            <person name="Lee S.-M."/>
            <person name="Levine A."/>
            <person name="Liu H."/>
            <person name="Masuda S."/>
            <person name="Mauel C."/>
            <person name="Medigue C."/>
            <person name="Medina N."/>
            <person name="Mellado R.P."/>
            <person name="Mizuno M."/>
            <person name="Moestl D."/>
            <person name="Nakai S."/>
            <person name="Noback M."/>
            <person name="Noone D."/>
            <person name="O'Reilly M."/>
            <person name="Ogawa K."/>
            <person name="Ogiwara A."/>
            <person name="Oudega B."/>
            <person name="Park S.-H."/>
            <person name="Parro V."/>
            <person name="Pohl T.M."/>
            <person name="Portetelle D."/>
            <person name="Porwollik S."/>
            <person name="Prescott A.M."/>
            <person name="Presecan E."/>
            <person name="Pujic P."/>
            <person name="Purnelle B."/>
            <person name="Rapoport G."/>
            <person name="Rey M."/>
            <person name="Reynolds S."/>
            <person name="Rieger M."/>
            <person name="Rivolta C."/>
            <person name="Rocha E."/>
            <person name="Roche B."/>
            <person name="Rose M."/>
            <person name="Sadaie Y."/>
            <person name="Sato T."/>
            <person name="Scanlan E."/>
            <person name="Schleich S."/>
            <person name="Schroeter R."/>
            <person name="Scoffone F."/>
            <person name="Sekiguchi J."/>
            <person name="Sekowska A."/>
            <person name="Seror S.J."/>
            <person name="Serror P."/>
            <person name="Shin B.-S."/>
            <person name="Soldo B."/>
            <person name="Sorokin A."/>
            <person name="Tacconi E."/>
            <person name="Takagi T."/>
            <person name="Takahashi H."/>
            <person name="Takemaru K."/>
            <person name="Takeuchi M."/>
            <person name="Tamakoshi A."/>
            <person name="Tanaka T."/>
            <person name="Terpstra P."/>
            <person name="Tognoni A."/>
            <person name="Tosato V."/>
            <person name="Uchiyama S."/>
            <person name="Vandenbol M."/>
            <person name="Vannier F."/>
            <person name="Vassarotti A."/>
            <person name="Viari A."/>
            <person name="Wambutt R."/>
            <person name="Wedler E."/>
            <person name="Wedler H."/>
            <person name="Weitzenegger T."/>
            <person name="Winters P."/>
            <person name="Wipat A."/>
            <person name="Yamamoto H."/>
            <person name="Yamane K."/>
            <person name="Yasumoto K."/>
            <person name="Yata K."/>
            <person name="Yoshida K."/>
            <person name="Yoshikawa H.-F."/>
            <person name="Zumstein E."/>
            <person name="Yoshikawa H."/>
            <person name="Danchin A."/>
        </authorList>
    </citation>
    <scope>NUCLEOTIDE SEQUENCE [LARGE SCALE GENOMIC DNA]</scope>
    <source>
        <strain>168</strain>
    </source>
</reference>
<reference key="3">
    <citation type="journal article" date="1993" name="J. Bacteriol.">
        <title>Cloning, nucleotide sequence, and regulation of the Bacillus subtilis pbpF gene, which codes for a putative class A high-molecular-weight penicillin-binding protein.</title>
        <authorList>
            <person name="Popham D.L."/>
            <person name="Setlow P."/>
        </authorList>
    </citation>
    <scope>NUCLEOTIDE SEQUENCE [GENOMIC DNA] OF 1-67</scope>
    <source>
        <strain>168</strain>
    </source>
</reference>
<dbReference type="EMBL" id="Y14083">
    <property type="protein sequence ID" value="CAA74515.1"/>
    <property type="molecule type" value="Genomic_DNA"/>
</dbReference>
<dbReference type="EMBL" id="AL009126">
    <property type="protein sequence ID" value="CAB12849.1"/>
    <property type="molecule type" value="Genomic_DNA"/>
</dbReference>
<dbReference type="EMBL" id="L10630">
    <property type="protein sequence ID" value="AAA71940.2"/>
    <property type="molecule type" value="Genomic_DNA"/>
</dbReference>
<dbReference type="PIR" id="E69832">
    <property type="entry name" value="E69832"/>
</dbReference>
<dbReference type="RefSeq" id="NP_388890.1">
    <property type="nucleotide sequence ID" value="NC_000964.3"/>
</dbReference>
<dbReference type="RefSeq" id="WP_009966927.1">
    <property type="nucleotide sequence ID" value="NZ_OZ025638.1"/>
</dbReference>
<dbReference type="FunCoup" id="P38048">
    <property type="interactions" value="61"/>
</dbReference>
<dbReference type="STRING" id="224308.BSU10090"/>
<dbReference type="PaxDb" id="224308-BSU10090"/>
<dbReference type="DNASU" id="936298"/>
<dbReference type="EnsemblBacteria" id="CAB12849">
    <property type="protein sequence ID" value="CAB12849"/>
    <property type="gene ID" value="BSU_10090"/>
</dbReference>
<dbReference type="GeneID" id="936298"/>
<dbReference type="KEGG" id="bsu:BSU10090"/>
<dbReference type="PATRIC" id="fig|224308.179.peg.1085"/>
<dbReference type="InParanoid" id="P38048"/>
<dbReference type="OrthoDB" id="1456570at2"/>
<dbReference type="BioCyc" id="BSUB:BSU10090-MONOMER"/>
<dbReference type="Proteomes" id="UP000001570">
    <property type="component" value="Chromosome"/>
</dbReference>
<protein>
    <recommendedName>
        <fullName>Uncharacterized protein YhgB</fullName>
    </recommendedName>
</protein>
<gene>
    <name type="primary">yhgB</name>
    <name type="synonym">yixB</name>
    <name type="ordered locus">BSU10090</name>
</gene>
<feature type="chain" id="PRO_0000049577" description="Uncharacterized protein YhgB">
    <location>
        <begin position="1"/>
        <end position="104"/>
    </location>
</feature>
<organism>
    <name type="scientific">Bacillus subtilis (strain 168)</name>
    <dbReference type="NCBI Taxonomy" id="224308"/>
    <lineage>
        <taxon>Bacteria</taxon>
        <taxon>Bacillati</taxon>
        <taxon>Bacillota</taxon>
        <taxon>Bacilli</taxon>
        <taxon>Bacillales</taxon>
        <taxon>Bacillaceae</taxon>
        <taxon>Bacillus</taxon>
    </lineage>
</organism>
<accession>P38048</accession>
<name>YHGB_BACSU</name>
<proteinExistence type="predicted"/>
<sequence length="104" mass="11998">MKHTCPVCGFKDWLNRHMIMKAIILMKSARAAVFSSDLMSTRCSTRITHIEPSESIIAYRKNWLAEGCVIFSPECFPKHLQKANRGLRHHLIEQLKQINVHLPS</sequence>